<dbReference type="EC" id="7.1.1.-" evidence="1"/>
<dbReference type="EMBL" id="CP000667">
    <property type="protein sequence ID" value="ABP56492.1"/>
    <property type="molecule type" value="Genomic_DNA"/>
</dbReference>
<dbReference type="RefSeq" id="WP_012015260.1">
    <property type="nucleotide sequence ID" value="NC_009380.1"/>
</dbReference>
<dbReference type="SMR" id="A4XC35"/>
<dbReference type="STRING" id="369723.Strop_4062"/>
<dbReference type="KEGG" id="stp:Strop_4062"/>
<dbReference type="PATRIC" id="fig|369723.5.peg.4200"/>
<dbReference type="eggNOG" id="COG0649">
    <property type="taxonomic scope" value="Bacteria"/>
</dbReference>
<dbReference type="HOGENOM" id="CLU_015134_1_2_11"/>
<dbReference type="Proteomes" id="UP000000235">
    <property type="component" value="Chromosome"/>
</dbReference>
<dbReference type="GO" id="GO:0005886">
    <property type="term" value="C:plasma membrane"/>
    <property type="evidence" value="ECO:0007669"/>
    <property type="project" value="UniProtKB-SubCell"/>
</dbReference>
<dbReference type="GO" id="GO:0051287">
    <property type="term" value="F:NAD binding"/>
    <property type="evidence" value="ECO:0007669"/>
    <property type="project" value="InterPro"/>
</dbReference>
<dbReference type="GO" id="GO:0050136">
    <property type="term" value="F:NADH:ubiquinone reductase (non-electrogenic) activity"/>
    <property type="evidence" value="ECO:0007669"/>
    <property type="project" value="UniProtKB-UniRule"/>
</dbReference>
<dbReference type="GO" id="GO:0048038">
    <property type="term" value="F:quinone binding"/>
    <property type="evidence" value="ECO:0007669"/>
    <property type="project" value="UniProtKB-KW"/>
</dbReference>
<dbReference type="Gene3D" id="1.10.645.10">
    <property type="entry name" value="Cytochrome-c3 Hydrogenase, chain B"/>
    <property type="match status" value="1"/>
</dbReference>
<dbReference type="HAMAP" id="MF_01358">
    <property type="entry name" value="NDH1_NuoD"/>
    <property type="match status" value="1"/>
</dbReference>
<dbReference type="InterPro" id="IPR001135">
    <property type="entry name" value="NADH_Q_OxRdtase_suD"/>
</dbReference>
<dbReference type="InterPro" id="IPR014029">
    <property type="entry name" value="NADH_UbQ_OxRdtase_49kDa_CS"/>
</dbReference>
<dbReference type="InterPro" id="IPR022885">
    <property type="entry name" value="NDH1_su_D/H"/>
</dbReference>
<dbReference type="InterPro" id="IPR029014">
    <property type="entry name" value="NiFe-Hase_large"/>
</dbReference>
<dbReference type="NCBIfam" id="TIGR01962">
    <property type="entry name" value="NuoD"/>
    <property type="match status" value="1"/>
</dbReference>
<dbReference type="NCBIfam" id="NF004739">
    <property type="entry name" value="PRK06075.1"/>
    <property type="match status" value="1"/>
</dbReference>
<dbReference type="PANTHER" id="PTHR11993:SF10">
    <property type="entry name" value="NADH DEHYDROGENASE [UBIQUINONE] IRON-SULFUR PROTEIN 2, MITOCHONDRIAL"/>
    <property type="match status" value="1"/>
</dbReference>
<dbReference type="PANTHER" id="PTHR11993">
    <property type="entry name" value="NADH-UBIQUINONE OXIDOREDUCTASE 49 KDA SUBUNIT"/>
    <property type="match status" value="1"/>
</dbReference>
<dbReference type="Pfam" id="PF00346">
    <property type="entry name" value="Complex1_49kDa"/>
    <property type="match status" value="1"/>
</dbReference>
<dbReference type="SUPFAM" id="SSF56762">
    <property type="entry name" value="HydB/Nqo4-like"/>
    <property type="match status" value="1"/>
</dbReference>
<dbReference type="PROSITE" id="PS00535">
    <property type="entry name" value="COMPLEX1_49K"/>
    <property type="match status" value="1"/>
</dbReference>
<keyword id="KW-1003">Cell membrane</keyword>
<keyword id="KW-0472">Membrane</keyword>
<keyword id="KW-0520">NAD</keyword>
<keyword id="KW-0874">Quinone</keyword>
<keyword id="KW-1185">Reference proteome</keyword>
<keyword id="KW-1278">Translocase</keyword>
<keyword id="KW-0813">Transport</keyword>
<sequence>MSASNYATERETAEGKVFTVTGGDWDVVLSGTDPINDERIVVNMGPQHPSTHGVLRLVLELEGETVRELRSVVGYLHTGIEKNMEFRNWVQGAAFVTRMDYLAPLFNETAYALAVEKLLGIEEQITERATTIRVLMMELNRISSHLVWVATTAMELGAINMMLYGFREREYVLEIFELITGLRMNHAYVRPGGVAQDVPDEAIAKIRDFLELMPKKLAEYEKMLSGQPIWLERTQNVGVLDATGCLAMGVTGPVLRSAGLAWDLRKTMPYCGYETYEFDVPTHTDGDVWGRYLVRLAEIRESLKLVEQAVDRLRPGPVMVADRKIAWPAQLAIGVDGMGNSLEHVAKIMGQSMESLIHHFKLVTEGFRVPPGQVYVGIEAPRGELGVHAVSDGGTRPYRVHYREPSFVNLQALPAMAEGGLIADVIAGGASLDPVMGGCDR</sequence>
<feature type="chain" id="PRO_0000357925" description="NADH-quinone oxidoreductase subunit D 1">
    <location>
        <begin position="1"/>
        <end position="441"/>
    </location>
</feature>
<gene>
    <name evidence="1" type="primary">nuoD1</name>
    <name type="ordered locus">Strop_4062</name>
</gene>
<name>NUOD1_SALTO</name>
<organism>
    <name type="scientific">Salinispora tropica (strain ATCC BAA-916 / DSM 44818 / JCM 13857 / NBRC 105044 / CNB-440)</name>
    <dbReference type="NCBI Taxonomy" id="369723"/>
    <lineage>
        <taxon>Bacteria</taxon>
        <taxon>Bacillati</taxon>
        <taxon>Actinomycetota</taxon>
        <taxon>Actinomycetes</taxon>
        <taxon>Micromonosporales</taxon>
        <taxon>Micromonosporaceae</taxon>
        <taxon>Salinispora</taxon>
    </lineage>
</organism>
<proteinExistence type="inferred from homology"/>
<reference key="1">
    <citation type="journal article" date="2007" name="Proc. Natl. Acad. Sci. U.S.A.">
        <title>Genome sequencing reveals complex secondary metabolome in the marine actinomycete Salinispora tropica.</title>
        <authorList>
            <person name="Udwary D.W."/>
            <person name="Zeigler L."/>
            <person name="Asolkar R.N."/>
            <person name="Singan V."/>
            <person name="Lapidus A."/>
            <person name="Fenical W."/>
            <person name="Jensen P.R."/>
            <person name="Moore B.S."/>
        </authorList>
    </citation>
    <scope>NUCLEOTIDE SEQUENCE [LARGE SCALE GENOMIC DNA]</scope>
    <source>
        <strain>ATCC BAA-916 / DSM 44818 / JCM 13857 / NBRC 105044 / CNB-440</strain>
    </source>
</reference>
<accession>A4XC35</accession>
<protein>
    <recommendedName>
        <fullName evidence="1">NADH-quinone oxidoreductase subunit D 1</fullName>
        <ecNumber evidence="1">7.1.1.-</ecNumber>
    </recommendedName>
    <alternativeName>
        <fullName evidence="1">NADH dehydrogenase I subunit D 1</fullName>
    </alternativeName>
    <alternativeName>
        <fullName evidence="1">NDH-1 subunit D 1</fullName>
    </alternativeName>
</protein>
<comment type="function">
    <text evidence="1">NDH-1 shuttles electrons from NADH, via FMN and iron-sulfur (Fe-S) centers, to quinones in the respiratory chain. The immediate electron acceptor for the enzyme in this species is believed to be a menaquinone. Couples the redox reaction to proton translocation (for every two electrons transferred, four hydrogen ions are translocated across the cytoplasmic membrane), and thus conserves the redox energy in a proton gradient.</text>
</comment>
<comment type="catalytic activity">
    <reaction evidence="1">
        <text>a quinone + NADH + 5 H(+)(in) = a quinol + NAD(+) + 4 H(+)(out)</text>
        <dbReference type="Rhea" id="RHEA:57888"/>
        <dbReference type="ChEBI" id="CHEBI:15378"/>
        <dbReference type="ChEBI" id="CHEBI:24646"/>
        <dbReference type="ChEBI" id="CHEBI:57540"/>
        <dbReference type="ChEBI" id="CHEBI:57945"/>
        <dbReference type="ChEBI" id="CHEBI:132124"/>
    </reaction>
</comment>
<comment type="subunit">
    <text evidence="1">NDH-1 is composed of 14 different subunits. Subunits NuoB, C, D, E, F, and G constitute the peripheral sector of the complex.</text>
</comment>
<comment type="subcellular location">
    <subcellularLocation>
        <location evidence="1">Cell membrane</location>
        <topology evidence="1">Peripheral membrane protein</topology>
        <orientation evidence="1">Cytoplasmic side</orientation>
    </subcellularLocation>
</comment>
<comment type="similarity">
    <text evidence="1">Belongs to the complex I 49 kDa subunit family.</text>
</comment>
<evidence type="ECO:0000255" key="1">
    <source>
        <dbReference type="HAMAP-Rule" id="MF_01358"/>
    </source>
</evidence>